<gene>
    <name evidence="1" type="primary">trmD</name>
    <name type="ordered locus">SSON_2764</name>
</gene>
<keyword id="KW-0963">Cytoplasm</keyword>
<keyword id="KW-0489">Methyltransferase</keyword>
<keyword id="KW-1185">Reference proteome</keyword>
<keyword id="KW-0949">S-adenosyl-L-methionine</keyword>
<keyword id="KW-0808">Transferase</keyword>
<keyword id="KW-0819">tRNA processing</keyword>
<sequence>MWIGIISLFPEMFRAITDYGVTGRAVKNGLLSIQSWSPRDFTHDRHRTVDDRPYGGGPGMLMMVQPLRDAIHAAKAAAGEGAKVIYLSPQGRKLDQAGVSELATNQKLILVCGRYEGIDERVIQTEIDEEWSIGDYVLSGGELPAMTLIDSVSRFIPGVLGHEASATEDSFAEGLLDCPHYTRPEVLEGMEVPPVLLSGNHAEIRRWRLKQSLGRTWLRRPELLENLALTEEQARLLAEFKTEHAQQQHKHDGMA</sequence>
<reference key="1">
    <citation type="journal article" date="2005" name="Nucleic Acids Res.">
        <title>Genome dynamics and diversity of Shigella species, the etiologic agents of bacillary dysentery.</title>
        <authorList>
            <person name="Yang F."/>
            <person name="Yang J."/>
            <person name="Zhang X."/>
            <person name="Chen L."/>
            <person name="Jiang Y."/>
            <person name="Yan Y."/>
            <person name="Tang X."/>
            <person name="Wang J."/>
            <person name="Xiong Z."/>
            <person name="Dong J."/>
            <person name="Xue Y."/>
            <person name="Zhu Y."/>
            <person name="Xu X."/>
            <person name="Sun L."/>
            <person name="Chen S."/>
            <person name="Nie H."/>
            <person name="Peng J."/>
            <person name="Xu J."/>
            <person name="Wang Y."/>
            <person name="Yuan Z."/>
            <person name="Wen Y."/>
            <person name="Yao Z."/>
            <person name="Shen Y."/>
            <person name="Qiang B."/>
            <person name="Hou Y."/>
            <person name="Yu J."/>
            <person name="Jin Q."/>
        </authorList>
    </citation>
    <scope>NUCLEOTIDE SEQUENCE [LARGE SCALE GENOMIC DNA]</scope>
    <source>
        <strain>Ss046</strain>
    </source>
</reference>
<organism>
    <name type="scientific">Shigella sonnei (strain Ss046)</name>
    <dbReference type="NCBI Taxonomy" id="300269"/>
    <lineage>
        <taxon>Bacteria</taxon>
        <taxon>Pseudomonadati</taxon>
        <taxon>Pseudomonadota</taxon>
        <taxon>Gammaproteobacteria</taxon>
        <taxon>Enterobacterales</taxon>
        <taxon>Enterobacteriaceae</taxon>
        <taxon>Shigella</taxon>
    </lineage>
</organism>
<evidence type="ECO:0000255" key="1">
    <source>
        <dbReference type="HAMAP-Rule" id="MF_00605"/>
    </source>
</evidence>
<protein>
    <recommendedName>
        <fullName evidence="1">tRNA (guanine-N(1)-)-methyltransferase</fullName>
        <ecNumber evidence="1">2.1.1.228</ecNumber>
    </recommendedName>
    <alternativeName>
        <fullName evidence="1">M1G-methyltransferase</fullName>
    </alternativeName>
    <alternativeName>
        <fullName evidence="1">tRNA [GM37] methyltransferase</fullName>
    </alternativeName>
</protein>
<dbReference type="EC" id="2.1.1.228" evidence="1"/>
<dbReference type="EMBL" id="CP000038">
    <property type="protein sequence ID" value="AAZ89381.1"/>
    <property type="molecule type" value="Genomic_DNA"/>
</dbReference>
<dbReference type="RefSeq" id="WP_000264777.1">
    <property type="nucleotide sequence ID" value="NC_007384.1"/>
</dbReference>
<dbReference type="SMR" id="Q3YYN1"/>
<dbReference type="GeneID" id="93774457"/>
<dbReference type="KEGG" id="ssn:SSON_2764"/>
<dbReference type="HOGENOM" id="CLU_047363_0_1_6"/>
<dbReference type="Proteomes" id="UP000002529">
    <property type="component" value="Chromosome"/>
</dbReference>
<dbReference type="GO" id="GO:0005829">
    <property type="term" value="C:cytosol"/>
    <property type="evidence" value="ECO:0007669"/>
    <property type="project" value="TreeGrafter"/>
</dbReference>
<dbReference type="GO" id="GO:0052906">
    <property type="term" value="F:tRNA (guanine(37)-N1)-methyltransferase activity"/>
    <property type="evidence" value="ECO:0007669"/>
    <property type="project" value="UniProtKB-UniRule"/>
</dbReference>
<dbReference type="GO" id="GO:0002939">
    <property type="term" value="P:tRNA N1-guanine methylation"/>
    <property type="evidence" value="ECO:0007669"/>
    <property type="project" value="TreeGrafter"/>
</dbReference>
<dbReference type="CDD" id="cd18080">
    <property type="entry name" value="TrmD-like"/>
    <property type="match status" value="1"/>
</dbReference>
<dbReference type="FunFam" id="1.10.1270.20:FF:000001">
    <property type="entry name" value="tRNA (guanine-N(1)-)-methyltransferase"/>
    <property type="match status" value="1"/>
</dbReference>
<dbReference type="FunFam" id="3.40.1280.10:FF:000001">
    <property type="entry name" value="tRNA (guanine-N(1)-)-methyltransferase"/>
    <property type="match status" value="1"/>
</dbReference>
<dbReference type="Gene3D" id="3.40.1280.10">
    <property type="match status" value="1"/>
</dbReference>
<dbReference type="Gene3D" id="1.10.1270.20">
    <property type="entry name" value="tRNA(m1g37)methyltransferase, domain 2"/>
    <property type="match status" value="1"/>
</dbReference>
<dbReference type="HAMAP" id="MF_00605">
    <property type="entry name" value="TrmD"/>
    <property type="match status" value="1"/>
</dbReference>
<dbReference type="InterPro" id="IPR029028">
    <property type="entry name" value="Alpha/beta_knot_MTases"/>
</dbReference>
<dbReference type="InterPro" id="IPR023148">
    <property type="entry name" value="tRNA_m1G_MeTrfase_C_sf"/>
</dbReference>
<dbReference type="InterPro" id="IPR002649">
    <property type="entry name" value="tRNA_m1G_MeTrfase_TrmD"/>
</dbReference>
<dbReference type="InterPro" id="IPR029026">
    <property type="entry name" value="tRNA_m1G_MTases_N"/>
</dbReference>
<dbReference type="InterPro" id="IPR016009">
    <property type="entry name" value="tRNA_MeTrfase_TRMD/TRM10"/>
</dbReference>
<dbReference type="NCBIfam" id="NF000648">
    <property type="entry name" value="PRK00026.1"/>
    <property type="match status" value="1"/>
</dbReference>
<dbReference type="NCBIfam" id="TIGR00088">
    <property type="entry name" value="trmD"/>
    <property type="match status" value="1"/>
</dbReference>
<dbReference type="PANTHER" id="PTHR46417">
    <property type="entry name" value="TRNA (GUANINE-N(1)-)-METHYLTRANSFERASE"/>
    <property type="match status" value="1"/>
</dbReference>
<dbReference type="PANTHER" id="PTHR46417:SF1">
    <property type="entry name" value="TRNA (GUANINE-N(1)-)-METHYLTRANSFERASE"/>
    <property type="match status" value="1"/>
</dbReference>
<dbReference type="Pfam" id="PF01746">
    <property type="entry name" value="tRNA_m1G_MT"/>
    <property type="match status" value="1"/>
</dbReference>
<dbReference type="PIRSF" id="PIRSF000386">
    <property type="entry name" value="tRNA_mtase"/>
    <property type="match status" value="1"/>
</dbReference>
<dbReference type="SUPFAM" id="SSF75217">
    <property type="entry name" value="alpha/beta knot"/>
    <property type="match status" value="1"/>
</dbReference>
<accession>Q3YYN1</accession>
<proteinExistence type="inferred from homology"/>
<feature type="chain" id="PRO_0000257469" description="tRNA (guanine-N(1)-)-methyltransferase">
    <location>
        <begin position="1"/>
        <end position="255"/>
    </location>
</feature>
<feature type="binding site" evidence="1">
    <location>
        <position position="113"/>
    </location>
    <ligand>
        <name>S-adenosyl-L-methionine</name>
        <dbReference type="ChEBI" id="CHEBI:59789"/>
    </ligand>
</feature>
<feature type="binding site" evidence="1">
    <location>
        <begin position="133"/>
        <end position="138"/>
    </location>
    <ligand>
        <name>S-adenosyl-L-methionine</name>
        <dbReference type="ChEBI" id="CHEBI:59789"/>
    </ligand>
</feature>
<name>TRMD_SHISS</name>
<comment type="function">
    <text evidence="1">Specifically methylates guanosine-37 in various tRNAs.</text>
</comment>
<comment type="catalytic activity">
    <reaction evidence="1">
        <text>guanosine(37) in tRNA + S-adenosyl-L-methionine = N(1)-methylguanosine(37) in tRNA + S-adenosyl-L-homocysteine + H(+)</text>
        <dbReference type="Rhea" id="RHEA:36899"/>
        <dbReference type="Rhea" id="RHEA-COMP:10145"/>
        <dbReference type="Rhea" id="RHEA-COMP:10147"/>
        <dbReference type="ChEBI" id="CHEBI:15378"/>
        <dbReference type="ChEBI" id="CHEBI:57856"/>
        <dbReference type="ChEBI" id="CHEBI:59789"/>
        <dbReference type="ChEBI" id="CHEBI:73542"/>
        <dbReference type="ChEBI" id="CHEBI:74269"/>
        <dbReference type="EC" id="2.1.1.228"/>
    </reaction>
</comment>
<comment type="subunit">
    <text evidence="1">Homodimer.</text>
</comment>
<comment type="subcellular location">
    <subcellularLocation>
        <location evidence="1">Cytoplasm</location>
    </subcellularLocation>
</comment>
<comment type="similarity">
    <text evidence="1">Belongs to the RNA methyltransferase TrmD family.</text>
</comment>